<protein>
    <recommendedName>
        <fullName>G-protein coupled receptor 161</fullName>
    </recommendedName>
    <alternativeName>
        <fullName>G-protein coupled receptor RE2</fullName>
    </alternativeName>
</protein>
<comment type="function">
    <text evidence="1">Key negative regulator of Shh signaling, which promotes the processing of GLI3 into GLI3R during neural tube development. Recruited by TULP3 and the IFT-A complex to primary cilia and acts as a regulator of the PKA-dependent basal repression machinery in Shh signaling by increasing cAMP levels, leading to promote the PKA-dependent processing of GLI3 into GLI3R and repress the Shh signaling. In presence of SHH, it is removed from primary cilia and is internalized into recycling endosomes, preventing its activity and allowing activation of the Shh signaling. Its ligand is unknown (By similarity).</text>
</comment>
<comment type="interaction">
    <interactant intactId="EBI-6255622">
        <id>Q8N6U8</id>
    </interactant>
    <interactant intactId="EBI-12256978">
        <id>Q8N6F1-2</id>
        <label>CLDN19</label>
    </interactant>
    <organismsDiffer>false</organismsDiffer>
    <experiments>3</experiments>
</comment>
<comment type="interaction">
    <interactant intactId="EBI-6255622">
        <id>Q8N6U8</id>
    </interactant>
    <interactant intactId="EBI-372265">
        <id>P21964</id>
        <label>COMT</label>
    </interactant>
    <organismsDiffer>false</organismsDiffer>
    <experiments>3</experiments>
</comment>
<comment type="interaction">
    <interactant intactId="EBI-6255622">
        <id>Q8N6U8</id>
    </interactant>
    <interactant intactId="EBI-1753674">
        <id>P52803</id>
        <label>EFNA5</label>
    </interactant>
    <organismsDiffer>false</organismsDiffer>
    <experiments>3</experiments>
</comment>
<comment type="interaction">
    <interactant intactId="EBI-6255622">
        <id>Q8N6U8</id>
    </interactant>
    <interactant intactId="EBI-8644112">
        <id>Q9BRI3</id>
        <label>SLC30A2</label>
    </interactant>
    <organismsDiffer>false</organismsDiffer>
    <experiments>3</experiments>
</comment>
<comment type="interaction">
    <interactant intactId="EBI-6255622">
        <id>Q8N6U8</id>
    </interactant>
    <interactant intactId="EBI-12237619">
        <id>O75841</id>
        <label>UPK1B</label>
    </interactant>
    <organismsDiffer>false</organismsDiffer>
    <experiments>3</experiments>
</comment>
<comment type="subcellular location">
    <subcellularLocation>
        <location evidence="1">Cell projection</location>
        <location evidence="1">Cilium membrane</location>
        <topology evidence="1">Multi-pass membrane protein</topology>
    </subcellularLocation>
    <subcellularLocation>
        <location evidence="1">Cell membrane</location>
        <topology evidence="1">Multi-pass membrane protein</topology>
    </subcellularLocation>
    <text evidence="1">Mainly localizes to primary cilium in a TULP3 and IFT-A complex-dependent manner. In presence of SHH, it is removed from primary cilia and is internalized into recycling endosomes and is apparently not degraded (By similarity).</text>
</comment>
<comment type="alternative products">
    <event type="alternative splicing"/>
    <isoform>
        <id>Q8N6U8-1</id>
        <name>1</name>
        <sequence type="displayed"/>
    </isoform>
    <isoform>
        <id>Q8N6U8-2</id>
        <name>2</name>
        <sequence type="described" ref="VSP_010560 VSP_010561"/>
    </isoform>
    <isoform>
        <id>Q8N6U8-3</id>
        <name>3</name>
        <sequence type="described" ref="VSP_035561"/>
    </isoform>
    <isoform>
        <id>Q8N6U8-4</id>
        <name>4</name>
        <sequence type="described" ref="VSP_044778 VSP_044779"/>
    </isoform>
    <isoform>
        <id>Q8N6U8-5</id>
        <name>5</name>
        <sequence type="described" ref="VSP_045329"/>
    </isoform>
    <isoform>
        <id>Q8N6U8-6</id>
        <name>6</name>
        <sequence type="described" ref="VSP_046299"/>
    </isoform>
</comment>
<comment type="disease" evidence="4">
    <disease id="DI-01958">
        <name>Medulloblastoma</name>
        <acronym>MDB</acronym>
        <description>Malignant, invasive embryonal tumor of the cerebellum with a preferential manifestation in children.</description>
        <dbReference type="MIM" id="155255"/>
    </disease>
    <text>Disease susceptibility may be associated with variants affecting the gene represented in this entry.</text>
</comment>
<comment type="similarity">
    <text evidence="3">Belongs to the G-protein coupled receptor 1 family.</text>
</comment>
<sequence>MSLNSSLSCRKELSNLTEEEGGEGGVIITQFIAIIVITIFVCLGNLVIVVTLYKKSYLLTLSNKFVFSLTLSNFLLSVLVLPFVVTSSIRREWIFGVVWCNFSALLYLLISSASMLTLGVIAIDRYYAVLYPMVYPMKITGNRAVMALVYIWLHSLIGCLPPLFGWSSVEFDEFKWMCVAAWHREPGYTAFWQIWCALFPFLVMLVCYGFIFRVARVKARKVHCGTVVIVEEDAQRTGRKNSSTSTSSSGSRRNAFQGVVYSANQCKALITILVVLGAFMVTWGPYMVVIASEALWGKSSVSPSLETWATWLSFASAVCHPLIYGLWNKTVRKELLGMCFGDRYYREPFVQRQRTSRLFSISNRITDLGLSPHLTALMAGGQPLGHSSSTGDTGFSCSQDSGTDMMLLEDYTSDDNPPSHCTCPPKRRSSVTFEDEVEQIKEAAKNSILHVKAEVHKSLDSYAASLAKAIEAEAKINLFGEEALPGVLVTARTVPGGGFGGRRGSRTLVSQRLQLQSIEEGDVLAAEQR</sequence>
<accession>Q8N6U8</accession>
<accession>B3KV34</accession>
<accession>B7Z5D7</accession>
<accession>B7Z5E8</accession>
<accession>B7Z5Z6</accession>
<accession>F5GXD6</accession>
<accession>F5H6J7</accession>
<accession>O75963</accession>
<accession>Q5TGK0</accession>
<accession>Q5TGK1</accession>
<accession>Q5TGK2</accession>
<proteinExistence type="evidence at protein level"/>
<organism>
    <name type="scientific">Homo sapiens</name>
    <name type="common">Human</name>
    <dbReference type="NCBI Taxonomy" id="9606"/>
    <lineage>
        <taxon>Eukaryota</taxon>
        <taxon>Metazoa</taxon>
        <taxon>Chordata</taxon>
        <taxon>Craniata</taxon>
        <taxon>Vertebrata</taxon>
        <taxon>Euteleostomi</taxon>
        <taxon>Mammalia</taxon>
        <taxon>Eutheria</taxon>
        <taxon>Euarchontoglires</taxon>
        <taxon>Primates</taxon>
        <taxon>Haplorrhini</taxon>
        <taxon>Catarrhini</taxon>
        <taxon>Hominidae</taxon>
        <taxon>Homo</taxon>
    </lineage>
</organism>
<keyword id="KW-0002">3D-structure</keyword>
<keyword id="KW-0025">Alternative splicing</keyword>
<keyword id="KW-1003">Cell membrane</keyword>
<keyword id="KW-0966">Cell projection</keyword>
<keyword id="KW-0969">Cilium</keyword>
<keyword id="KW-0217">Developmental protein</keyword>
<keyword id="KW-1015">Disulfide bond</keyword>
<keyword id="KW-0297">G-protein coupled receptor</keyword>
<keyword id="KW-0325">Glycoprotein</keyword>
<keyword id="KW-0472">Membrane</keyword>
<keyword id="KW-1267">Proteomics identification</keyword>
<keyword id="KW-0675">Receptor</keyword>
<keyword id="KW-1185">Reference proteome</keyword>
<keyword id="KW-0807">Transducer</keyword>
<keyword id="KW-0812">Transmembrane</keyword>
<keyword id="KW-1133">Transmembrane helix</keyword>
<evidence type="ECO:0000250" key="1"/>
<evidence type="ECO:0000255" key="2"/>
<evidence type="ECO:0000255" key="3">
    <source>
        <dbReference type="PROSITE-ProRule" id="PRU00521"/>
    </source>
</evidence>
<evidence type="ECO:0000269" key="4">
    <source>
    </source>
</evidence>
<evidence type="ECO:0000303" key="5">
    <source>
    </source>
</evidence>
<evidence type="ECO:0000303" key="6">
    <source>
    </source>
</evidence>
<evidence type="ECO:0000305" key="7"/>
<evidence type="ECO:0007829" key="8">
    <source>
        <dbReference type="PDB" id="8SMV"/>
    </source>
</evidence>
<reference key="1">
    <citation type="submission" date="2003-04" db="EMBL/GenBank/DDBJ databases">
        <title>Isolation of cDNA coding for G-protein coupled receptor RE2.</title>
        <authorList>
            <person name="Warren C.N."/>
            <person name="Aronstam R.S."/>
            <person name="Sharma S.V."/>
        </authorList>
    </citation>
    <scope>NUCLEOTIDE SEQUENCE [MRNA] (ISOFORM 1)</scope>
    <source>
        <tissue>Brain</tissue>
    </source>
</reference>
<reference key="2">
    <citation type="journal article" date="1998" name="Recept. Channels">
        <title>Identification of a novel G-protein coupled receptor expressed in distinct brain regions and a defined olfactory zone.</title>
        <authorList>
            <person name="Raming K."/>
            <person name="Konzelmann S."/>
            <person name="Breer H."/>
        </authorList>
    </citation>
    <scope>NUCLEOTIDE SEQUENCE [MRNA] (ISOFORM 2)</scope>
    <source>
        <tissue>Fetal brain</tissue>
    </source>
</reference>
<reference key="3">
    <citation type="journal article" date="2004" name="Nat. Genet.">
        <title>Complete sequencing and characterization of 21,243 full-length human cDNAs.</title>
        <authorList>
            <person name="Ota T."/>
            <person name="Suzuki Y."/>
            <person name="Nishikawa T."/>
            <person name="Otsuki T."/>
            <person name="Sugiyama T."/>
            <person name="Irie R."/>
            <person name="Wakamatsu A."/>
            <person name="Hayashi K."/>
            <person name="Sato H."/>
            <person name="Nagai K."/>
            <person name="Kimura K."/>
            <person name="Makita H."/>
            <person name="Sekine M."/>
            <person name="Obayashi M."/>
            <person name="Nishi T."/>
            <person name="Shibahara T."/>
            <person name="Tanaka T."/>
            <person name="Ishii S."/>
            <person name="Yamamoto J."/>
            <person name="Saito K."/>
            <person name="Kawai Y."/>
            <person name="Isono Y."/>
            <person name="Nakamura Y."/>
            <person name="Nagahari K."/>
            <person name="Murakami K."/>
            <person name="Yasuda T."/>
            <person name="Iwayanagi T."/>
            <person name="Wagatsuma M."/>
            <person name="Shiratori A."/>
            <person name="Sudo H."/>
            <person name="Hosoiri T."/>
            <person name="Kaku Y."/>
            <person name="Kodaira H."/>
            <person name="Kondo H."/>
            <person name="Sugawara M."/>
            <person name="Takahashi M."/>
            <person name="Kanda K."/>
            <person name="Yokoi T."/>
            <person name="Furuya T."/>
            <person name="Kikkawa E."/>
            <person name="Omura Y."/>
            <person name="Abe K."/>
            <person name="Kamihara K."/>
            <person name="Katsuta N."/>
            <person name="Sato K."/>
            <person name="Tanikawa M."/>
            <person name="Yamazaki M."/>
            <person name="Ninomiya K."/>
            <person name="Ishibashi T."/>
            <person name="Yamashita H."/>
            <person name="Murakawa K."/>
            <person name="Fujimori K."/>
            <person name="Tanai H."/>
            <person name="Kimata M."/>
            <person name="Watanabe M."/>
            <person name="Hiraoka S."/>
            <person name="Chiba Y."/>
            <person name="Ishida S."/>
            <person name="Ono Y."/>
            <person name="Takiguchi S."/>
            <person name="Watanabe S."/>
            <person name="Yosida M."/>
            <person name="Hotuta T."/>
            <person name="Kusano J."/>
            <person name="Kanehori K."/>
            <person name="Takahashi-Fujii A."/>
            <person name="Hara H."/>
            <person name="Tanase T.-O."/>
            <person name="Nomura Y."/>
            <person name="Togiya S."/>
            <person name="Komai F."/>
            <person name="Hara R."/>
            <person name="Takeuchi K."/>
            <person name="Arita M."/>
            <person name="Imose N."/>
            <person name="Musashino K."/>
            <person name="Yuuki H."/>
            <person name="Oshima A."/>
            <person name="Sasaki N."/>
            <person name="Aotsuka S."/>
            <person name="Yoshikawa Y."/>
            <person name="Matsunawa H."/>
            <person name="Ichihara T."/>
            <person name="Shiohata N."/>
            <person name="Sano S."/>
            <person name="Moriya S."/>
            <person name="Momiyama H."/>
            <person name="Satoh N."/>
            <person name="Takami S."/>
            <person name="Terashima Y."/>
            <person name="Suzuki O."/>
            <person name="Nakagawa S."/>
            <person name="Senoh A."/>
            <person name="Mizoguchi H."/>
            <person name="Goto Y."/>
            <person name="Shimizu F."/>
            <person name="Wakebe H."/>
            <person name="Hishigaki H."/>
            <person name="Watanabe T."/>
            <person name="Sugiyama A."/>
            <person name="Takemoto M."/>
            <person name="Kawakami B."/>
            <person name="Yamazaki M."/>
            <person name="Watanabe K."/>
            <person name="Kumagai A."/>
            <person name="Itakura S."/>
            <person name="Fukuzumi Y."/>
            <person name="Fujimori Y."/>
            <person name="Komiyama M."/>
            <person name="Tashiro H."/>
            <person name="Tanigami A."/>
            <person name="Fujiwara T."/>
            <person name="Ono T."/>
            <person name="Yamada K."/>
            <person name="Fujii Y."/>
            <person name="Ozaki K."/>
            <person name="Hirao M."/>
            <person name="Ohmori Y."/>
            <person name="Kawabata A."/>
            <person name="Hikiji T."/>
            <person name="Kobatake N."/>
            <person name="Inagaki H."/>
            <person name="Ikema Y."/>
            <person name="Okamoto S."/>
            <person name="Okitani R."/>
            <person name="Kawakami T."/>
            <person name="Noguchi S."/>
            <person name="Itoh T."/>
            <person name="Shigeta K."/>
            <person name="Senba T."/>
            <person name="Matsumura K."/>
            <person name="Nakajima Y."/>
            <person name="Mizuno T."/>
            <person name="Morinaga M."/>
            <person name="Sasaki M."/>
            <person name="Togashi T."/>
            <person name="Oyama M."/>
            <person name="Hata H."/>
            <person name="Watanabe M."/>
            <person name="Komatsu T."/>
            <person name="Mizushima-Sugano J."/>
            <person name="Satoh T."/>
            <person name="Shirai Y."/>
            <person name="Takahashi Y."/>
            <person name="Nakagawa K."/>
            <person name="Okumura K."/>
            <person name="Nagase T."/>
            <person name="Nomura N."/>
            <person name="Kikuchi H."/>
            <person name="Masuho Y."/>
            <person name="Yamashita R."/>
            <person name="Nakai K."/>
            <person name="Yada T."/>
            <person name="Nakamura Y."/>
            <person name="Ohara O."/>
            <person name="Isogai T."/>
            <person name="Sugano S."/>
        </authorList>
    </citation>
    <scope>NUCLEOTIDE SEQUENCE [LARGE SCALE MRNA] (ISOFORMS 1; 3; 4; 5 AND 6)</scope>
    <source>
        <tissue>Brain</tissue>
        <tissue>Teratocarcinoma</tissue>
    </source>
</reference>
<reference key="4">
    <citation type="journal article" date="2006" name="Nature">
        <title>The DNA sequence and biological annotation of human chromosome 1.</title>
        <authorList>
            <person name="Gregory S.G."/>
            <person name="Barlow K.F."/>
            <person name="McLay K.E."/>
            <person name="Kaul R."/>
            <person name="Swarbreck D."/>
            <person name="Dunham A."/>
            <person name="Scott C.E."/>
            <person name="Howe K.L."/>
            <person name="Woodfine K."/>
            <person name="Spencer C.C.A."/>
            <person name="Jones M.C."/>
            <person name="Gillson C."/>
            <person name="Searle S."/>
            <person name="Zhou Y."/>
            <person name="Kokocinski F."/>
            <person name="McDonald L."/>
            <person name="Evans R."/>
            <person name="Phillips K."/>
            <person name="Atkinson A."/>
            <person name="Cooper R."/>
            <person name="Jones C."/>
            <person name="Hall R.E."/>
            <person name="Andrews T.D."/>
            <person name="Lloyd C."/>
            <person name="Ainscough R."/>
            <person name="Almeida J.P."/>
            <person name="Ambrose K.D."/>
            <person name="Anderson F."/>
            <person name="Andrew R.W."/>
            <person name="Ashwell R.I.S."/>
            <person name="Aubin K."/>
            <person name="Babbage A.K."/>
            <person name="Bagguley C.L."/>
            <person name="Bailey J."/>
            <person name="Beasley H."/>
            <person name="Bethel G."/>
            <person name="Bird C.P."/>
            <person name="Bray-Allen S."/>
            <person name="Brown J.Y."/>
            <person name="Brown A.J."/>
            <person name="Buckley D."/>
            <person name="Burton J."/>
            <person name="Bye J."/>
            <person name="Carder C."/>
            <person name="Chapman J.C."/>
            <person name="Clark S.Y."/>
            <person name="Clarke G."/>
            <person name="Clee C."/>
            <person name="Cobley V."/>
            <person name="Collier R.E."/>
            <person name="Corby N."/>
            <person name="Coville G.J."/>
            <person name="Davies J."/>
            <person name="Deadman R."/>
            <person name="Dunn M."/>
            <person name="Earthrowl M."/>
            <person name="Ellington A.G."/>
            <person name="Errington H."/>
            <person name="Frankish A."/>
            <person name="Frankland J."/>
            <person name="French L."/>
            <person name="Garner P."/>
            <person name="Garnett J."/>
            <person name="Gay L."/>
            <person name="Ghori M.R.J."/>
            <person name="Gibson R."/>
            <person name="Gilby L.M."/>
            <person name="Gillett W."/>
            <person name="Glithero R.J."/>
            <person name="Grafham D.V."/>
            <person name="Griffiths C."/>
            <person name="Griffiths-Jones S."/>
            <person name="Grocock R."/>
            <person name="Hammond S."/>
            <person name="Harrison E.S.I."/>
            <person name="Hart E."/>
            <person name="Haugen E."/>
            <person name="Heath P.D."/>
            <person name="Holmes S."/>
            <person name="Holt K."/>
            <person name="Howden P.J."/>
            <person name="Hunt A.R."/>
            <person name="Hunt S.E."/>
            <person name="Hunter G."/>
            <person name="Isherwood J."/>
            <person name="James R."/>
            <person name="Johnson C."/>
            <person name="Johnson D."/>
            <person name="Joy A."/>
            <person name="Kay M."/>
            <person name="Kershaw J.K."/>
            <person name="Kibukawa M."/>
            <person name="Kimberley A.M."/>
            <person name="King A."/>
            <person name="Knights A.J."/>
            <person name="Lad H."/>
            <person name="Laird G."/>
            <person name="Lawlor S."/>
            <person name="Leongamornlert D.A."/>
            <person name="Lloyd D.M."/>
            <person name="Loveland J."/>
            <person name="Lovell J."/>
            <person name="Lush M.J."/>
            <person name="Lyne R."/>
            <person name="Martin S."/>
            <person name="Mashreghi-Mohammadi M."/>
            <person name="Matthews L."/>
            <person name="Matthews N.S.W."/>
            <person name="McLaren S."/>
            <person name="Milne S."/>
            <person name="Mistry S."/>
            <person name="Moore M.J.F."/>
            <person name="Nickerson T."/>
            <person name="O'Dell C.N."/>
            <person name="Oliver K."/>
            <person name="Palmeiri A."/>
            <person name="Palmer S.A."/>
            <person name="Parker A."/>
            <person name="Patel D."/>
            <person name="Pearce A.V."/>
            <person name="Peck A.I."/>
            <person name="Pelan S."/>
            <person name="Phelps K."/>
            <person name="Phillimore B.J."/>
            <person name="Plumb R."/>
            <person name="Rajan J."/>
            <person name="Raymond C."/>
            <person name="Rouse G."/>
            <person name="Saenphimmachak C."/>
            <person name="Sehra H.K."/>
            <person name="Sheridan E."/>
            <person name="Shownkeen R."/>
            <person name="Sims S."/>
            <person name="Skuce C.D."/>
            <person name="Smith M."/>
            <person name="Steward C."/>
            <person name="Subramanian S."/>
            <person name="Sycamore N."/>
            <person name="Tracey A."/>
            <person name="Tromans A."/>
            <person name="Van Helmond Z."/>
            <person name="Wall M."/>
            <person name="Wallis J.M."/>
            <person name="White S."/>
            <person name="Whitehead S.L."/>
            <person name="Wilkinson J.E."/>
            <person name="Willey D.L."/>
            <person name="Williams H."/>
            <person name="Wilming L."/>
            <person name="Wray P.W."/>
            <person name="Wu Z."/>
            <person name="Coulson A."/>
            <person name="Vaudin M."/>
            <person name="Sulston J.E."/>
            <person name="Durbin R.M."/>
            <person name="Hubbard T."/>
            <person name="Wooster R."/>
            <person name="Dunham I."/>
            <person name="Carter N.P."/>
            <person name="McVean G."/>
            <person name="Ross M.T."/>
            <person name="Harrow J."/>
            <person name="Olson M.V."/>
            <person name="Beck S."/>
            <person name="Rogers J."/>
            <person name="Bentley D.R."/>
        </authorList>
    </citation>
    <scope>NUCLEOTIDE SEQUENCE [LARGE SCALE GENOMIC DNA]</scope>
</reference>
<reference key="5">
    <citation type="journal article" date="2004" name="Genome Res.">
        <title>The status, quality, and expansion of the NIH full-length cDNA project: the Mammalian Gene Collection (MGC).</title>
        <authorList>
            <consortium name="The MGC Project Team"/>
        </authorList>
    </citation>
    <scope>NUCLEOTIDE SEQUENCE [LARGE SCALE MRNA] (ISOFORM 1)</scope>
    <source>
        <tissue>Fetal brain</tissue>
    </source>
</reference>
<reference key="6">
    <citation type="journal article" date="2020" name="J. Clin. Oncol.">
        <title>Germline GPR161 Mutations Predispose to Pediatric Medulloblastoma.</title>
        <authorList>
            <person name="Begemann M."/>
            <person name="Waszak S.M."/>
            <person name="Robinson G.W."/>
            <person name="Jaeger N."/>
            <person name="Sharma T."/>
            <person name="Knopp C."/>
            <person name="Kraft F."/>
            <person name="Moser O."/>
            <person name="Mynarek M."/>
            <person name="Guerrini-Rousseau L."/>
            <person name="Brugieres L."/>
            <person name="Varlet P."/>
            <person name="Pietsch T."/>
            <person name="Bowers D.C."/>
            <person name="Chintagumpala M."/>
            <person name="Sahm F."/>
            <person name="Korbel J.O."/>
            <person name="Rutkowski S."/>
            <person name="Eggermann T."/>
            <person name="Gajjar A."/>
            <person name="Northcott P."/>
            <person name="Elbracht M."/>
            <person name="Pfister S.M."/>
            <person name="Kontny U."/>
            <person name="Kurth I."/>
        </authorList>
    </citation>
    <scope>INVOLVEMENT IN MDB</scope>
</reference>
<feature type="chain" id="PRO_0000069646" description="G-protein coupled receptor 161">
    <location>
        <begin position="1"/>
        <end position="529"/>
    </location>
</feature>
<feature type="topological domain" description="Extracellular" evidence="2">
    <location>
        <begin position="1"/>
        <end position="30"/>
    </location>
</feature>
<feature type="transmembrane region" description="Helical; Name=1" evidence="2">
    <location>
        <begin position="31"/>
        <end position="51"/>
    </location>
</feature>
<feature type="topological domain" description="Cytoplasmic" evidence="2">
    <location>
        <begin position="52"/>
        <end position="64"/>
    </location>
</feature>
<feature type="transmembrane region" description="Helical; Name=2" evidence="2">
    <location>
        <begin position="65"/>
        <end position="85"/>
    </location>
</feature>
<feature type="topological domain" description="Extracellular" evidence="2">
    <location>
        <begin position="86"/>
        <end position="101"/>
    </location>
</feature>
<feature type="transmembrane region" description="Helical; Name=3" evidence="2">
    <location>
        <begin position="102"/>
        <end position="123"/>
    </location>
</feature>
<feature type="topological domain" description="Cytoplasmic" evidence="2">
    <location>
        <begin position="124"/>
        <end position="143"/>
    </location>
</feature>
<feature type="transmembrane region" description="Helical; Name=4" evidence="2">
    <location>
        <begin position="144"/>
        <end position="164"/>
    </location>
</feature>
<feature type="topological domain" description="Extracellular" evidence="2">
    <location>
        <begin position="165"/>
        <end position="190"/>
    </location>
</feature>
<feature type="transmembrane region" description="Helical; Name=5" evidence="2">
    <location>
        <begin position="191"/>
        <end position="211"/>
    </location>
</feature>
<feature type="topological domain" description="Cytoplasmic" evidence="2">
    <location>
        <begin position="212"/>
        <end position="269"/>
    </location>
</feature>
<feature type="transmembrane region" description="Helical; Name=6" evidence="2">
    <location>
        <begin position="270"/>
        <end position="290"/>
    </location>
</feature>
<feature type="topological domain" description="Extracellular" evidence="2">
    <location>
        <begin position="291"/>
        <end position="306"/>
    </location>
</feature>
<feature type="transmembrane region" description="Helical; Name=7" evidence="2">
    <location>
        <begin position="307"/>
        <end position="327"/>
    </location>
</feature>
<feature type="topological domain" description="Cytoplasmic" evidence="2">
    <location>
        <begin position="328"/>
        <end position="529"/>
    </location>
</feature>
<feature type="glycosylation site" description="N-linked (GlcNAc...) asparagine" evidence="2">
    <location>
        <position position="4"/>
    </location>
</feature>
<feature type="glycosylation site" description="N-linked (GlcNAc...) asparagine" evidence="2">
    <location>
        <position position="15"/>
    </location>
</feature>
<feature type="disulfide bond" evidence="3">
    <location>
        <begin position="100"/>
        <end position="178"/>
    </location>
</feature>
<feature type="splice variant" id="VSP_035561" description="In isoform 3." evidence="5">
    <location>
        <begin position="1"/>
        <end position="132"/>
    </location>
</feature>
<feature type="splice variant" id="VSP_045329" description="In isoform 5." evidence="5">
    <original>MSLNSSLSCRKELSNLTEEEGGEGGVIITQFIAIIVITIFVCLGNLVIVVTLYKKSYLLTLSNKFVFSLTLSNFLLSVLVLPFVVTSSIRREWIFGVVWCNFSALLYLLISSASMLTLGVIAIDR</original>
    <variation>MLVPVGWMNES</variation>
    <location>
        <begin position="1"/>
        <end position="125"/>
    </location>
</feature>
<feature type="splice variant" id="VSP_044778" description="In isoform 4." evidence="5">
    <original>MSLNSSLSCRKELSNLTEEEGGEGGVIITQFIAIIVITIFVCLGNLV</original>
    <variation>MGGRRCVPGTLPMRAAPPGAKRLHVPLRAKGVGRSGHAPRLESVRTS</variation>
    <location>
        <begin position="1"/>
        <end position="47"/>
    </location>
</feature>
<feature type="splice variant" id="VSP_046299" description="In isoform 6." evidence="5">
    <original>M</original>
    <variation>MSARGVVQHALPTPRRGALTM</variation>
    <location>
        <position position="1"/>
    </location>
</feature>
<feature type="splice variant" id="VSP_044779" description="In isoform 4." evidence="5">
    <location>
        <begin position="48"/>
        <end position="125"/>
    </location>
</feature>
<feature type="splice variant" id="VSP_010560" description="In isoform 2." evidence="6">
    <original>TDMML</original>
    <variation>NLRAL</variation>
    <location>
        <begin position="403"/>
        <end position="407"/>
    </location>
</feature>
<feature type="splice variant" id="VSP_010561" description="In isoform 2." evidence="6">
    <location>
        <begin position="408"/>
        <end position="529"/>
    </location>
</feature>
<feature type="sequence conflict" description="In Ref. 3; BAH12873." evidence="7" ref="3">
    <original>Q</original>
    <variation>R</variation>
    <location>
        <position position="193"/>
    </location>
</feature>
<feature type="sequence conflict" description="In Ref. 3; BAH13082." evidence="7" ref="3">
    <original>W</original>
    <variation>R</variation>
    <location>
        <position position="195"/>
    </location>
</feature>
<feature type="sequence conflict" description="In Ref. 3; BAH12873." evidence="7" ref="3">
    <original>Y</original>
    <variation>N</variation>
    <location>
        <position position="324"/>
    </location>
</feature>
<feature type="sequence conflict" description="In Ref. 3; BAH13082." evidence="7" ref="3">
    <original>C</original>
    <variation>S</variation>
    <location>
        <position position="421"/>
    </location>
</feature>
<feature type="sequence conflict" description="In Ref. 3; BAH12873." evidence="7" ref="3">
    <original>G</original>
    <variation>V</variation>
    <location>
        <position position="500"/>
    </location>
</feature>
<feature type="helix" evidence="8">
    <location>
        <begin position="31"/>
        <end position="54"/>
    </location>
</feature>
<feature type="helix" evidence="8">
    <location>
        <begin position="56"/>
        <end position="58"/>
    </location>
</feature>
<feature type="helix" evidence="8">
    <location>
        <begin position="63"/>
        <end position="79"/>
    </location>
</feature>
<feature type="helix" evidence="8">
    <location>
        <begin position="81"/>
        <end position="90"/>
    </location>
</feature>
<feature type="helix" evidence="8">
    <location>
        <begin position="97"/>
        <end position="130"/>
    </location>
</feature>
<feature type="turn" evidence="8">
    <location>
        <begin position="132"/>
        <end position="134"/>
    </location>
</feature>
<feature type="helix" evidence="8">
    <location>
        <begin position="135"/>
        <end position="138"/>
    </location>
</feature>
<feature type="helix" evidence="8">
    <location>
        <begin position="141"/>
        <end position="163"/>
    </location>
</feature>
<feature type="turn" evidence="8">
    <location>
        <begin position="164"/>
        <end position="166"/>
    </location>
</feature>
<feature type="strand" evidence="8">
    <location>
        <begin position="169"/>
        <end position="172"/>
    </location>
</feature>
<feature type="turn" evidence="8">
    <location>
        <begin position="173"/>
        <end position="176"/>
    </location>
</feature>
<feature type="strand" evidence="8">
    <location>
        <begin position="177"/>
        <end position="180"/>
    </location>
</feature>
<feature type="helix" evidence="8">
    <location>
        <begin position="182"/>
        <end position="184"/>
    </location>
</feature>
<feature type="helix" evidence="8">
    <location>
        <begin position="188"/>
        <end position="196"/>
    </location>
</feature>
<feature type="helix" evidence="8">
    <location>
        <begin position="198"/>
        <end position="219"/>
    </location>
</feature>
<feature type="helix" evidence="8">
    <location>
        <begin position="267"/>
        <end position="296"/>
    </location>
</feature>
<feature type="helix" evidence="8">
    <location>
        <begin position="298"/>
        <end position="300"/>
    </location>
</feature>
<feature type="helix" evidence="8">
    <location>
        <begin position="303"/>
        <end position="314"/>
    </location>
</feature>
<feature type="helix" evidence="8">
    <location>
        <begin position="316"/>
        <end position="324"/>
    </location>
</feature>
<feature type="turn" evidence="8">
    <location>
        <begin position="325"/>
        <end position="327"/>
    </location>
</feature>
<feature type="helix" evidence="8">
    <location>
        <begin position="329"/>
        <end position="339"/>
    </location>
</feature>
<dbReference type="EMBL" id="AY275468">
    <property type="protein sequence ID" value="AAP32300.1"/>
    <property type="molecule type" value="mRNA"/>
</dbReference>
<dbReference type="EMBL" id="AF091890">
    <property type="protein sequence ID" value="AAC61598.1"/>
    <property type="molecule type" value="mRNA"/>
</dbReference>
<dbReference type="EMBL" id="AK056040">
    <property type="protein sequence ID" value="BAG51611.1"/>
    <property type="molecule type" value="mRNA"/>
</dbReference>
<dbReference type="EMBL" id="AK122656">
    <property type="protein sequence ID" value="BAG53646.1"/>
    <property type="molecule type" value="mRNA"/>
</dbReference>
<dbReference type="EMBL" id="AK298797">
    <property type="protein sequence ID" value="BAH12873.1"/>
    <property type="molecule type" value="mRNA"/>
</dbReference>
<dbReference type="EMBL" id="AK298850">
    <property type="protein sequence ID" value="BAH12884.1"/>
    <property type="molecule type" value="mRNA"/>
</dbReference>
<dbReference type="EMBL" id="AK299634">
    <property type="protein sequence ID" value="BAH13082.1"/>
    <property type="molecule type" value="mRNA"/>
</dbReference>
<dbReference type="EMBL" id="AL033532">
    <property type="status" value="NOT_ANNOTATED_CDS"/>
    <property type="molecule type" value="Genomic_DNA"/>
</dbReference>
<dbReference type="EMBL" id="BC028163">
    <property type="protein sequence ID" value="AAH28163.1"/>
    <property type="molecule type" value="mRNA"/>
</dbReference>
<dbReference type="CCDS" id="CCDS1268.1">
    <molecule id="Q8N6U8-1"/>
</dbReference>
<dbReference type="CCDS" id="CCDS58042.1">
    <molecule id="Q8N6U8-3"/>
</dbReference>
<dbReference type="CCDS" id="CCDS58043.1">
    <molecule id="Q8N6U8-6"/>
</dbReference>
<dbReference type="CCDS" id="CCDS58044.1">
    <molecule id="Q8N6U8-4"/>
</dbReference>
<dbReference type="CCDS" id="CCDS58045.1">
    <molecule id="Q8N6U8-5"/>
</dbReference>
<dbReference type="RefSeq" id="NP_001254538.1">
    <molecule id="Q8N6U8-6"/>
    <property type="nucleotide sequence ID" value="NM_001267609.1"/>
</dbReference>
<dbReference type="RefSeq" id="NP_001254539.1">
    <molecule id="Q8N6U8-1"/>
    <property type="nucleotide sequence ID" value="NM_001267610.2"/>
</dbReference>
<dbReference type="RefSeq" id="NP_001254541.1">
    <molecule id="Q8N6U8-3"/>
    <property type="nucleotide sequence ID" value="NM_001267612.2"/>
</dbReference>
<dbReference type="RefSeq" id="NP_001254542.1">
    <molecule id="Q8N6U8-4"/>
    <property type="nucleotide sequence ID" value="NM_001267613.1"/>
</dbReference>
<dbReference type="RefSeq" id="NP_001254543.1">
    <molecule id="Q8N6U8-5"/>
    <property type="nucleotide sequence ID" value="NM_001267614.1"/>
</dbReference>
<dbReference type="RefSeq" id="NP_001336561.1">
    <molecule id="Q8N6U8-1"/>
    <property type="nucleotide sequence ID" value="NM_001349632.1"/>
</dbReference>
<dbReference type="RefSeq" id="NP_001336562.1">
    <molecule id="Q8N6U8-1"/>
    <property type="nucleotide sequence ID" value="NM_001349633.1"/>
</dbReference>
<dbReference type="RefSeq" id="NP_001336563.1">
    <molecule id="Q8N6U8-1"/>
    <property type="nucleotide sequence ID" value="NM_001349634.1"/>
</dbReference>
<dbReference type="RefSeq" id="NP_001336564.1">
    <molecule id="Q8N6U8-3"/>
    <property type="nucleotide sequence ID" value="NM_001349635.1"/>
</dbReference>
<dbReference type="RefSeq" id="NP_001362812.1">
    <molecule id="Q8N6U8-1"/>
    <property type="nucleotide sequence ID" value="NM_001375883.1"/>
</dbReference>
<dbReference type="RefSeq" id="NP_001362813.1">
    <molecule id="Q8N6U8-1"/>
    <property type="nucleotide sequence ID" value="NM_001375884.1"/>
</dbReference>
<dbReference type="RefSeq" id="NP_001362814.1">
    <molecule id="Q8N6U8-1"/>
    <property type="nucleotide sequence ID" value="NM_001375885.1"/>
</dbReference>
<dbReference type="RefSeq" id="NP_001368838.1">
    <molecule id="Q8N6U8-1"/>
    <property type="nucleotide sequence ID" value="NM_001381909.1"/>
</dbReference>
<dbReference type="RefSeq" id="NP_722561.1">
    <molecule id="Q8N6U8-1"/>
    <property type="nucleotide sequence ID" value="NM_153832.3"/>
</dbReference>
<dbReference type="RefSeq" id="XP_005245112.1">
    <property type="nucleotide sequence ID" value="XM_005245055.2"/>
</dbReference>
<dbReference type="RefSeq" id="XP_005245113.1">
    <property type="nucleotide sequence ID" value="XM_005245056.2"/>
</dbReference>
<dbReference type="RefSeq" id="XP_005245114.1">
    <property type="nucleotide sequence ID" value="XM_005245057.4"/>
</dbReference>
<dbReference type="RefSeq" id="XP_011507677.1">
    <property type="nucleotide sequence ID" value="XM_011509375.2"/>
</dbReference>
<dbReference type="RefSeq" id="XP_011507678.1">
    <property type="nucleotide sequence ID" value="XM_011509376.2"/>
</dbReference>
<dbReference type="RefSeq" id="XP_011507679.1">
    <property type="nucleotide sequence ID" value="XM_011509377.1"/>
</dbReference>
<dbReference type="RefSeq" id="XP_011507680.1">
    <property type="nucleotide sequence ID" value="XM_011509378.1"/>
</dbReference>
<dbReference type="RefSeq" id="XP_016856348.1">
    <property type="nucleotide sequence ID" value="XM_017000859.1"/>
</dbReference>
<dbReference type="RefSeq" id="XP_016856349.1">
    <property type="nucleotide sequence ID" value="XM_017000860.1"/>
</dbReference>
<dbReference type="RefSeq" id="XP_016856350.1">
    <property type="nucleotide sequence ID" value="XM_017000861.1"/>
</dbReference>
<dbReference type="RefSeq" id="XP_016856351.1">
    <property type="nucleotide sequence ID" value="XM_017000862.1"/>
</dbReference>
<dbReference type="PDB" id="8KH4">
    <property type="method" value="EM"/>
    <property type="resolution" value="3.10 A"/>
    <property type="chains" value="A=2-348"/>
</dbReference>
<dbReference type="PDB" id="8SMV">
    <property type="method" value="EM"/>
    <property type="resolution" value="2.74 A"/>
    <property type="chains" value="R=1-529"/>
</dbReference>
<dbReference type="PDBsum" id="8KH4"/>
<dbReference type="PDBsum" id="8SMV"/>
<dbReference type="EMDB" id="EMD-37236"/>
<dbReference type="EMDB" id="EMD-40603"/>
<dbReference type="SMR" id="Q8N6U8"/>
<dbReference type="BioGRID" id="117000">
    <property type="interactions" value="29"/>
</dbReference>
<dbReference type="FunCoup" id="Q8N6U8">
    <property type="interactions" value="491"/>
</dbReference>
<dbReference type="IntAct" id="Q8N6U8">
    <property type="interactions" value="25"/>
</dbReference>
<dbReference type="MINT" id="Q8N6U8"/>
<dbReference type="STRING" id="9606.ENSP00000441039"/>
<dbReference type="ChEMBL" id="CHEMBL4523894"/>
<dbReference type="TCDB" id="9.A.14.1.11">
    <property type="family name" value="the g-protein-coupled receptor (gpcr) family"/>
</dbReference>
<dbReference type="GlyCosmos" id="Q8N6U8">
    <property type="glycosylation" value="2 sites, No reported glycans"/>
</dbReference>
<dbReference type="GlyGen" id="Q8N6U8">
    <property type="glycosylation" value="2 sites, 1 N-linked glycan (1 site)"/>
</dbReference>
<dbReference type="iPTMnet" id="Q8N6U8"/>
<dbReference type="PhosphoSitePlus" id="Q8N6U8"/>
<dbReference type="BioMuta" id="GPR161"/>
<dbReference type="DMDM" id="48428085"/>
<dbReference type="jPOST" id="Q8N6U8"/>
<dbReference type="MassIVE" id="Q8N6U8"/>
<dbReference type="PaxDb" id="9606-ENSP00000441039"/>
<dbReference type="PeptideAtlas" id="Q8N6U8"/>
<dbReference type="ProteomicsDB" id="24390"/>
<dbReference type="ProteomicsDB" id="27210"/>
<dbReference type="ProteomicsDB" id="6685"/>
<dbReference type="ProteomicsDB" id="72236">
    <molecule id="Q8N6U8-1"/>
</dbReference>
<dbReference type="ProteomicsDB" id="72238">
    <molecule id="Q8N6U8-3"/>
</dbReference>
<dbReference type="TopDownProteomics" id="Q8N6U8-1">
    <molecule id="Q8N6U8-1"/>
</dbReference>
<dbReference type="Antibodypedia" id="2941">
    <property type="antibodies" value="273 antibodies from 32 providers"/>
</dbReference>
<dbReference type="DNASU" id="23432"/>
<dbReference type="Ensembl" id="ENST00000367835.1">
    <molecule id="Q8N6U8-1"/>
    <property type="protein sequence ID" value="ENSP00000356809.1"/>
    <property type="gene ID" value="ENSG00000143147.15"/>
</dbReference>
<dbReference type="Ensembl" id="ENST00000367836.5">
    <molecule id="Q8N6U8-3"/>
    <property type="protein sequence ID" value="ENSP00000356810.1"/>
    <property type="gene ID" value="ENSG00000143147.15"/>
</dbReference>
<dbReference type="Ensembl" id="ENST00000367838.5">
    <molecule id="Q8N6U8-1"/>
    <property type="protein sequence ID" value="ENSP00000356812.1"/>
    <property type="gene ID" value="ENSG00000143147.15"/>
</dbReference>
<dbReference type="Ensembl" id="ENST00000537209.5">
    <molecule id="Q8N6U8-6"/>
    <property type="protein sequence ID" value="ENSP00000441039.1"/>
    <property type="gene ID" value="ENSG00000143147.15"/>
</dbReference>
<dbReference type="Ensembl" id="ENST00000539777.5">
    <molecule id="Q8N6U8-4"/>
    <property type="protein sequence ID" value="ENSP00000437576.1"/>
    <property type="gene ID" value="ENSG00000143147.15"/>
</dbReference>
<dbReference type="Ensembl" id="ENST00000546300.5">
    <molecule id="Q8N6U8-5"/>
    <property type="protein sequence ID" value="ENSP00000444348.1"/>
    <property type="gene ID" value="ENSG00000143147.15"/>
</dbReference>
<dbReference type="Ensembl" id="ENST00000682931.1">
    <molecule id="Q8N6U8-1"/>
    <property type="protein sequence ID" value="ENSP00000506967.1"/>
    <property type="gene ID" value="ENSG00000143147.15"/>
</dbReference>
<dbReference type="GeneID" id="23432"/>
<dbReference type="KEGG" id="hsa:23432"/>
<dbReference type="MANE-Select" id="ENST00000682931.1">
    <property type="protein sequence ID" value="ENSP00000506967.1"/>
    <property type="RefSeq nucleotide sequence ID" value="NM_001375883.1"/>
    <property type="RefSeq protein sequence ID" value="NP_001362812.1"/>
</dbReference>
<dbReference type="UCSC" id="uc001gfb.5">
    <molecule id="Q8N6U8-1"/>
    <property type="organism name" value="human"/>
</dbReference>
<dbReference type="AGR" id="HGNC:23694"/>
<dbReference type="CTD" id="23432"/>
<dbReference type="DisGeNET" id="23432"/>
<dbReference type="GeneCards" id="GPR161"/>
<dbReference type="HGNC" id="HGNC:23694">
    <property type="gene designation" value="GPR161"/>
</dbReference>
<dbReference type="HPA" id="ENSG00000143147">
    <property type="expression patterns" value="Tissue enhanced (endometrium, smooth muscle)"/>
</dbReference>
<dbReference type="MalaCards" id="GPR161"/>
<dbReference type="MIM" id="155255">
    <property type="type" value="phenotype"/>
</dbReference>
<dbReference type="MIM" id="612250">
    <property type="type" value="gene"/>
</dbReference>
<dbReference type="neXtProt" id="NX_Q8N6U8"/>
<dbReference type="OpenTargets" id="ENSG00000143147"/>
<dbReference type="Orphanet" id="95496">
    <property type="disease" value="Pituitary stalk interruption syndrome"/>
</dbReference>
<dbReference type="PharmGKB" id="PA134931474"/>
<dbReference type="VEuPathDB" id="HostDB:ENSG00000143147"/>
<dbReference type="eggNOG" id="KOG3656">
    <property type="taxonomic scope" value="Eukaryota"/>
</dbReference>
<dbReference type="GeneTree" id="ENSGT00940000157829"/>
<dbReference type="HOGENOM" id="CLU_038027_0_0_1"/>
<dbReference type="InParanoid" id="Q8N6U8"/>
<dbReference type="OrthoDB" id="5980076at2759"/>
<dbReference type="PAN-GO" id="Q8N6U8">
    <property type="GO annotations" value="3 GO annotations based on evolutionary models"/>
</dbReference>
<dbReference type="PhylomeDB" id="Q8N6U8"/>
<dbReference type="TreeFam" id="TF331895"/>
<dbReference type="PathwayCommons" id="Q8N6U8"/>
<dbReference type="Reactome" id="R-HSA-5610787">
    <property type="pathway name" value="Hedgehog 'off' state"/>
</dbReference>
<dbReference type="Reactome" id="R-HSA-5632684">
    <property type="pathway name" value="Hedgehog 'on' state"/>
</dbReference>
<dbReference type="SignaLink" id="Q8N6U8"/>
<dbReference type="SIGNOR" id="Q8N6U8"/>
<dbReference type="BioGRID-ORCS" id="23432">
    <property type="hits" value="16 hits in 1147 CRISPR screens"/>
</dbReference>
<dbReference type="ChiTaRS" id="GPR161">
    <property type="organism name" value="human"/>
</dbReference>
<dbReference type="GeneWiki" id="GPR161"/>
<dbReference type="GenomeRNAi" id="23432"/>
<dbReference type="Pharos" id="Q8N6U8">
    <property type="development level" value="Tbio"/>
</dbReference>
<dbReference type="PRO" id="PR:Q8N6U8"/>
<dbReference type="Proteomes" id="UP000005640">
    <property type="component" value="Chromosome 1"/>
</dbReference>
<dbReference type="RNAct" id="Q8N6U8">
    <property type="molecule type" value="protein"/>
</dbReference>
<dbReference type="Bgee" id="ENSG00000143147">
    <property type="expression patterns" value="Expressed in cortical plate and 190 other cell types or tissues"/>
</dbReference>
<dbReference type="ExpressionAtlas" id="Q8N6U8">
    <property type="expression patterns" value="baseline and differential"/>
</dbReference>
<dbReference type="GO" id="GO:0060170">
    <property type="term" value="C:ciliary membrane"/>
    <property type="evidence" value="ECO:0000304"/>
    <property type="project" value="Reactome"/>
</dbReference>
<dbReference type="GO" id="GO:0005929">
    <property type="term" value="C:cilium"/>
    <property type="evidence" value="ECO:0000250"/>
    <property type="project" value="UniProtKB"/>
</dbReference>
<dbReference type="GO" id="GO:0030666">
    <property type="term" value="C:endocytic vesicle membrane"/>
    <property type="evidence" value="ECO:0000304"/>
    <property type="project" value="Reactome"/>
</dbReference>
<dbReference type="GO" id="GO:0055037">
    <property type="term" value="C:recycling endosome"/>
    <property type="evidence" value="ECO:0000250"/>
    <property type="project" value="UniProtKB"/>
</dbReference>
<dbReference type="GO" id="GO:0004930">
    <property type="term" value="F:G protein-coupled receptor activity"/>
    <property type="evidence" value="ECO:0000250"/>
    <property type="project" value="UniProtKB"/>
</dbReference>
<dbReference type="GO" id="GO:0007189">
    <property type="term" value="P:adenylate cyclase-activating G protein-coupled receptor signaling pathway"/>
    <property type="evidence" value="ECO:0000250"/>
    <property type="project" value="UniProtKB"/>
</dbReference>
<dbReference type="GO" id="GO:0007186">
    <property type="term" value="P:G protein-coupled receptor signaling pathway"/>
    <property type="evidence" value="ECO:0000318"/>
    <property type="project" value="GO_Central"/>
</dbReference>
<dbReference type="GO" id="GO:1901621">
    <property type="term" value="P:negative regulation of smoothened signaling pathway involved in dorsal/ventral neural tube patterning"/>
    <property type="evidence" value="ECO:0000250"/>
    <property type="project" value="UniProtKB"/>
</dbReference>
<dbReference type="CDD" id="cd15214">
    <property type="entry name" value="7tmA_GPR161"/>
    <property type="match status" value="1"/>
</dbReference>
<dbReference type="FunFam" id="1.20.1070.10:FF:000091">
    <property type="entry name" value="G-protein coupled receptor 161"/>
    <property type="match status" value="1"/>
</dbReference>
<dbReference type="Gene3D" id="1.20.1070.10">
    <property type="entry name" value="Rhodopsin 7-helix transmembrane proteins"/>
    <property type="match status" value="1"/>
</dbReference>
<dbReference type="InterPro" id="IPR000276">
    <property type="entry name" value="GPCR_Rhodpsn"/>
</dbReference>
<dbReference type="InterPro" id="IPR017452">
    <property type="entry name" value="GPCR_Rhodpsn_7TM"/>
</dbReference>
<dbReference type="PANTHER" id="PTHR22752">
    <property type="entry name" value="G PROTEIN-COUPLED RECEPTOR"/>
    <property type="match status" value="1"/>
</dbReference>
<dbReference type="PANTHER" id="PTHR22752:SF10">
    <property type="entry name" value="G-PROTEIN COUPLED RECEPTOR 161"/>
    <property type="match status" value="1"/>
</dbReference>
<dbReference type="Pfam" id="PF00001">
    <property type="entry name" value="7tm_1"/>
    <property type="match status" value="1"/>
</dbReference>
<dbReference type="PRINTS" id="PR00237">
    <property type="entry name" value="GPCRRHODOPSN"/>
</dbReference>
<dbReference type="SUPFAM" id="SSF81321">
    <property type="entry name" value="Family A G protein-coupled receptor-like"/>
    <property type="match status" value="1"/>
</dbReference>
<dbReference type="PROSITE" id="PS00237">
    <property type="entry name" value="G_PROTEIN_RECEP_F1_1"/>
    <property type="match status" value="1"/>
</dbReference>
<dbReference type="PROSITE" id="PS50262">
    <property type="entry name" value="G_PROTEIN_RECEP_F1_2"/>
    <property type="match status" value="1"/>
</dbReference>
<gene>
    <name type="primary">GPR161</name>
</gene>
<name>GP161_HUMAN</name>